<dbReference type="EC" id="2.5.1.7" evidence="1"/>
<dbReference type="EMBL" id="AP008934">
    <property type="protein sequence ID" value="BAE17929.1"/>
    <property type="molecule type" value="Genomic_DNA"/>
</dbReference>
<dbReference type="SMR" id="Q49Z47"/>
<dbReference type="GeneID" id="3615751"/>
<dbReference type="KEGG" id="ssp:SSP0784"/>
<dbReference type="PATRIC" id="fig|342451.11.peg.786"/>
<dbReference type="eggNOG" id="COG0766">
    <property type="taxonomic scope" value="Bacteria"/>
</dbReference>
<dbReference type="HOGENOM" id="CLU_027387_0_0_9"/>
<dbReference type="OrthoDB" id="9803760at2"/>
<dbReference type="UniPathway" id="UPA00219"/>
<dbReference type="Proteomes" id="UP000006371">
    <property type="component" value="Chromosome"/>
</dbReference>
<dbReference type="GO" id="GO:0005737">
    <property type="term" value="C:cytoplasm"/>
    <property type="evidence" value="ECO:0007669"/>
    <property type="project" value="UniProtKB-SubCell"/>
</dbReference>
<dbReference type="GO" id="GO:0008760">
    <property type="term" value="F:UDP-N-acetylglucosamine 1-carboxyvinyltransferase activity"/>
    <property type="evidence" value="ECO:0007669"/>
    <property type="project" value="UniProtKB-UniRule"/>
</dbReference>
<dbReference type="GO" id="GO:0051301">
    <property type="term" value="P:cell division"/>
    <property type="evidence" value="ECO:0007669"/>
    <property type="project" value="UniProtKB-KW"/>
</dbReference>
<dbReference type="GO" id="GO:0071555">
    <property type="term" value="P:cell wall organization"/>
    <property type="evidence" value="ECO:0007669"/>
    <property type="project" value="UniProtKB-KW"/>
</dbReference>
<dbReference type="GO" id="GO:0009252">
    <property type="term" value="P:peptidoglycan biosynthetic process"/>
    <property type="evidence" value="ECO:0007669"/>
    <property type="project" value="UniProtKB-UniRule"/>
</dbReference>
<dbReference type="GO" id="GO:0008360">
    <property type="term" value="P:regulation of cell shape"/>
    <property type="evidence" value="ECO:0007669"/>
    <property type="project" value="UniProtKB-KW"/>
</dbReference>
<dbReference type="GO" id="GO:0019277">
    <property type="term" value="P:UDP-N-acetylgalactosamine biosynthetic process"/>
    <property type="evidence" value="ECO:0007669"/>
    <property type="project" value="InterPro"/>
</dbReference>
<dbReference type="CDD" id="cd01555">
    <property type="entry name" value="UdpNAET"/>
    <property type="match status" value="1"/>
</dbReference>
<dbReference type="FunFam" id="3.65.10.10:FF:000001">
    <property type="entry name" value="UDP-N-acetylglucosamine 1-carboxyvinyltransferase"/>
    <property type="match status" value="1"/>
</dbReference>
<dbReference type="Gene3D" id="3.65.10.10">
    <property type="entry name" value="Enolpyruvate transferase domain"/>
    <property type="match status" value="2"/>
</dbReference>
<dbReference type="HAMAP" id="MF_00111">
    <property type="entry name" value="MurA"/>
    <property type="match status" value="1"/>
</dbReference>
<dbReference type="InterPro" id="IPR001986">
    <property type="entry name" value="Enolpyruvate_Tfrase_dom"/>
</dbReference>
<dbReference type="InterPro" id="IPR036968">
    <property type="entry name" value="Enolpyruvate_Tfrase_sf"/>
</dbReference>
<dbReference type="InterPro" id="IPR050068">
    <property type="entry name" value="MurA_subfamily"/>
</dbReference>
<dbReference type="InterPro" id="IPR013792">
    <property type="entry name" value="RNA3'P_cycl/enolpyr_Trfase_a/b"/>
</dbReference>
<dbReference type="InterPro" id="IPR005750">
    <property type="entry name" value="UDP_GlcNAc_COvinyl_MurA"/>
</dbReference>
<dbReference type="NCBIfam" id="TIGR01072">
    <property type="entry name" value="murA"/>
    <property type="match status" value="1"/>
</dbReference>
<dbReference type="NCBIfam" id="NF006873">
    <property type="entry name" value="PRK09369.1"/>
    <property type="match status" value="1"/>
</dbReference>
<dbReference type="PANTHER" id="PTHR43783">
    <property type="entry name" value="UDP-N-ACETYLGLUCOSAMINE 1-CARBOXYVINYLTRANSFERASE"/>
    <property type="match status" value="1"/>
</dbReference>
<dbReference type="PANTHER" id="PTHR43783:SF1">
    <property type="entry name" value="UDP-N-ACETYLGLUCOSAMINE 1-CARBOXYVINYLTRANSFERASE"/>
    <property type="match status" value="1"/>
</dbReference>
<dbReference type="Pfam" id="PF00275">
    <property type="entry name" value="EPSP_synthase"/>
    <property type="match status" value="1"/>
</dbReference>
<dbReference type="SUPFAM" id="SSF55205">
    <property type="entry name" value="EPT/RTPC-like"/>
    <property type="match status" value="1"/>
</dbReference>
<accession>Q49Z47</accession>
<keyword id="KW-0131">Cell cycle</keyword>
<keyword id="KW-0132">Cell division</keyword>
<keyword id="KW-0133">Cell shape</keyword>
<keyword id="KW-0961">Cell wall biogenesis/degradation</keyword>
<keyword id="KW-0963">Cytoplasm</keyword>
<keyword id="KW-0573">Peptidoglycan synthesis</keyword>
<keyword id="KW-0670">Pyruvate</keyword>
<keyword id="KW-1185">Reference proteome</keyword>
<keyword id="KW-0808">Transferase</keyword>
<name>MURA2_STAS1</name>
<reference key="1">
    <citation type="journal article" date="2005" name="Proc. Natl. Acad. Sci. U.S.A.">
        <title>Whole genome sequence of Staphylococcus saprophyticus reveals the pathogenesis of uncomplicated urinary tract infection.</title>
        <authorList>
            <person name="Kuroda M."/>
            <person name="Yamashita A."/>
            <person name="Hirakawa H."/>
            <person name="Kumano M."/>
            <person name="Morikawa K."/>
            <person name="Higashide M."/>
            <person name="Maruyama A."/>
            <person name="Inose Y."/>
            <person name="Matoba K."/>
            <person name="Toh H."/>
            <person name="Kuhara S."/>
            <person name="Hattori M."/>
            <person name="Ohta T."/>
        </authorList>
    </citation>
    <scope>NUCLEOTIDE SEQUENCE [LARGE SCALE GENOMIC DNA]</scope>
    <source>
        <strain>ATCC 15305 / DSM 20229 / NCIMB 8711 / NCTC 7292 / S-41</strain>
    </source>
</reference>
<evidence type="ECO:0000255" key="1">
    <source>
        <dbReference type="HAMAP-Rule" id="MF_00111"/>
    </source>
</evidence>
<organism>
    <name type="scientific">Staphylococcus saprophyticus subsp. saprophyticus (strain ATCC 15305 / DSM 20229 / NCIMB 8711 / NCTC 7292 / S-41)</name>
    <dbReference type="NCBI Taxonomy" id="342451"/>
    <lineage>
        <taxon>Bacteria</taxon>
        <taxon>Bacillati</taxon>
        <taxon>Bacillota</taxon>
        <taxon>Bacilli</taxon>
        <taxon>Bacillales</taxon>
        <taxon>Staphylococcaceae</taxon>
        <taxon>Staphylococcus</taxon>
    </lineage>
</organism>
<gene>
    <name evidence="1" type="primary">murA2</name>
    <name type="ordered locus">SSP0784</name>
</gene>
<proteinExistence type="inferred from homology"/>
<sequence length="421" mass="45031">MDMIEINGGNRLTGEVKVSGAKNAVLPVLTASLLASEGVSKLMNVPALSDVETINNVISTLNAEVSYDKDEESVTVDATKELNEEAPYEYVSKMRASILVMGPLLARLGHAKVALPGGCAIGSRPIEQHIKGFEELGADIHMDGGFIYASTENGLKGTTIHLDFPSVGATQNIIMAASLAEGKTVLENVAREPEIVDLANYINEMGGNVSGAGTDTIIIHGVETLHGVEHAIIPDRIEAGTLLIAGAITRGDVLVNGAIKEHMTSLVYKLEEMGVNLDYQDDAIRVRVEDELKPVDIKTLPHPGFPTDMQSQMMALLLTAEGHKVVTETVFENRFMHVAEFKRMNAKISVEGRSAKIEGKSELQGAQVKATDLRAAAALILAGLVADGTTQVTELKHLDRGYVDLHGKLEALGADIKRTQA</sequence>
<protein>
    <recommendedName>
        <fullName evidence="1">UDP-N-acetylglucosamine 1-carboxyvinyltransferase 2</fullName>
        <ecNumber evidence="1">2.5.1.7</ecNumber>
    </recommendedName>
    <alternativeName>
        <fullName evidence="1">Enoylpyruvate transferase 2</fullName>
    </alternativeName>
    <alternativeName>
        <fullName evidence="1">UDP-N-acetylglucosamine enolpyruvyl transferase 2</fullName>
        <shortName evidence="1">EPT 2</shortName>
    </alternativeName>
</protein>
<comment type="function">
    <text evidence="1">Cell wall formation. Adds enolpyruvyl to UDP-N-acetylglucosamine.</text>
</comment>
<comment type="catalytic activity">
    <reaction evidence="1">
        <text>phosphoenolpyruvate + UDP-N-acetyl-alpha-D-glucosamine = UDP-N-acetyl-3-O-(1-carboxyvinyl)-alpha-D-glucosamine + phosphate</text>
        <dbReference type="Rhea" id="RHEA:18681"/>
        <dbReference type="ChEBI" id="CHEBI:43474"/>
        <dbReference type="ChEBI" id="CHEBI:57705"/>
        <dbReference type="ChEBI" id="CHEBI:58702"/>
        <dbReference type="ChEBI" id="CHEBI:68483"/>
        <dbReference type="EC" id="2.5.1.7"/>
    </reaction>
</comment>
<comment type="pathway">
    <text evidence="1">Cell wall biogenesis; peptidoglycan biosynthesis.</text>
</comment>
<comment type="subcellular location">
    <subcellularLocation>
        <location evidence="1">Cytoplasm</location>
    </subcellularLocation>
</comment>
<comment type="similarity">
    <text evidence="1">Belongs to the EPSP synthase family. MurA subfamily.</text>
</comment>
<feature type="chain" id="PRO_0000231270" description="UDP-N-acetylglucosamine 1-carboxyvinyltransferase 2">
    <location>
        <begin position="1"/>
        <end position="421"/>
    </location>
</feature>
<feature type="active site" description="Proton donor" evidence="1">
    <location>
        <position position="119"/>
    </location>
</feature>
<feature type="binding site" evidence="1">
    <location>
        <begin position="22"/>
        <end position="23"/>
    </location>
    <ligand>
        <name>phosphoenolpyruvate</name>
        <dbReference type="ChEBI" id="CHEBI:58702"/>
    </ligand>
</feature>
<feature type="binding site" evidence="1">
    <location>
        <position position="95"/>
    </location>
    <ligand>
        <name>UDP-N-acetyl-alpha-D-glucosamine</name>
        <dbReference type="ChEBI" id="CHEBI:57705"/>
    </ligand>
</feature>
<feature type="binding site" evidence="1">
    <location>
        <begin position="124"/>
        <end position="128"/>
    </location>
    <ligand>
        <name>UDP-N-acetyl-alpha-D-glucosamine</name>
        <dbReference type="ChEBI" id="CHEBI:57705"/>
    </ligand>
</feature>
<feature type="binding site" evidence="1">
    <location>
        <position position="308"/>
    </location>
    <ligand>
        <name>UDP-N-acetyl-alpha-D-glucosamine</name>
        <dbReference type="ChEBI" id="CHEBI:57705"/>
    </ligand>
</feature>
<feature type="binding site" evidence="1">
    <location>
        <position position="330"/>
    </location>
    <ligand>
        <name>UDP-N-acetyl-alpha-D-glucosamine</name>
        <dbReference type="ChEBI" id="CHEBI:57705"/>
    </ligand>
</feature>
<feature type="modified residue" description="2-(S-cysteinyl)pyruvic acid O-phosphothioketal" evidence="1">
    <location>
        <position position="119"/>
    </location>
</feature>